<proteinExistence type="inferred from homology"/>
<reference key="1">
    <citation type="journal article" date="2008" name="Genome Res.">
        <title>Comparative genome analysis of Salmonella enteritidis PT4 and Salmonella gallinarum 287/91 provides insights into evolutionary and host adaptation pathways.</title>
        <authorList>
            <person name="Thomson N.R."/>
            <person name="Clayton D.J."/>
            <person name="Windhorst D."/>
            <person name="Vernikos G."/>
            <person name="Davidson S."/>
            <person name="Churcher C."/>
            <person name="Quail M.A."/>
            <person name="Stevens M."/>
            <person name="Jones M.A."/>
            <person name="Watson M."/>
            <person name="Barron A."/>
            <person name="Layton A."/>
            <person name="Pickard D."/>
            <person name="Kingsley R.A."/>
            <person name="Bignell A."/>
            <person name="Clark L."/>
            <person name="Harris B."/>
            <person name="Ormond D."/>
            <person name="Abdellah Z."/>
            <person name="Brooks K."/>
            <person name="Cherevach I."/>
            <person name="Chillingworth T."/>
            <person name="Woodward J."/>
            <person name="Norberczak H."/>
            <person name="Lord A."/>
            <person name="Arrowsmith C."/>
            <person name="Jagels K."/>
            <person name="Moule S."/>
            <person name="Mungall K."/>
            <person name="Saunders M."/>
            <person name="Whitehead S."/>
            <person name="Chabalgoity J.A."/>
            <person name="Maskell D."/>
            <person name="Humphreys T."/>
            <person name="Roberts M."/>
            <person name="Barrow P.A."/>
            <person name="Dougan G."/>
            <person name="Parkhill J."/>
        </authorList>
    </citation>
    <scope>NUCLEOTIDE SEQUENCE [LARGE SCALE GENOMIC DNA]</scope>
    <source>
        <strain>P125109</strain>
    </source>
</reference>
<name>GHRB_SALEP</name>
<keyword id="KW-0963">Cytoplasm</keyword>
<keyword id="KW-0520">NAD</keyword>
<keyword id="KW-0521">NADP</keyword>
<keyword id="KW-0560">Oxidoreductase</keyword>
<evidence type="ECO:0000255" key="1">
    <source>
        <dbReference type="HAMAP-Rule" id="MF_01667"/>
    </source>
</evidence>
<comment type="function">
    <text evidence="1">Catalyzes the NADPH-dependent reduction of glyoxylate and hydroxypyruvate into glycolate and glycerate, respectively.</text>
</comment>
<comment type="catalytic activity">
    <reaction evidence="1">
        <text>glycolate + NADP(+) = glyoxylate + NADPH + H(+)</text>
        <dbReference type="Rhea" id="RHEA:10992"/>
        <dbReference type="ChEBI" id="CHEBI:15378"/>
        <dbReference type="ChEBI" id="CHEBI:29805"/>
        <dbReference type="ChEBI" id="CHEBI:36655"/>
        <dbReference type="ChEBI" id="CHEBI:57783"/>
        <dbReference type="ChEBI" id="CHEBI:58349"/>
        <dbReference type="EC" id="1.1.1.79"/>
    </reaction>
</comment>
<comment type="catalytic activity">
    <reaction evidence="1">
        <text>(R)-glycerate + NAD(+) = 3-hydroxypyruvate + NADH + H(+)</text>
        <dbReference type="Rhea" id="RHEA:17905"/>
        <dbReference type="ChEBI" id="CHEBI:15378"/>
        <dbReference type="ChEBI" id="CHEBI:16659"/>
        <dbReference type="ChEBI" id="CHEBI:17180"/>
        <dbReference type="ChEBI" id="CHEBI:57540"/>
        <dbReference type="ChEBI" id="CHEBI:57945"/>
        <dbReference type="EC" id="1.1.1.81"/>
    </reaction>
</comment>
<comment type="catalytic activity">
    <reaction evidence="1">
        <text>(R)-glycerate + NADP(+) = 3-hydroxypyruvate + NADPH + H(+)</text>
        <dbReference type="Rhea" id="RHEA:18657"/>
        <dbReference type="ChEBI" id="CHEBI:15378"/>
        <dbReference type="ChEBI" id="CHEBI:16659"/>
        <dbReference type="ChEBI" id="CHEBI:17180"/>
        <dbReference type="ChEBI" id="CHEBI:57783"/>
        <dbReference type="ChEBI" id="CHEBI:58349"/>
        <dbReference type="EC" id="1.1.1.81"/>
    </reaction>
</comment>
<comment type="subunit">
    <text evidence="1">Homodimer.</text>
</comment>
<comment type="subcellular location">
    <subcellularLocation>
        <location evidence="1">Cytoplasm</location>
    </subcellularLocation>
</comment>
<comment type="similarity">
    <text evidence="1">Belongs to the D-isomer specific 2-hydroxyacid dehydrogenase family. GhrB subfamily.</text>
</comment>
<dbReference type="EC" id="1.1.1.79" evidence="1"/>
<dbReference type="EC" id="1.1.1.81" evidence="1"/>
<dbReference type="EMBL" id="AM933172">
    <property type="protein sequence ID" value="CAR35046.1"/>
    <property type="molecule type" value="Genomic_DNA"/>
</dbReference>
<dbReference type="RefSeq" id="WP_000804678.1">
    <property type="nucleotide sequence ID" value="NC_011294.1"/>
</dbReference>
<dbReference type="SMR" id="B5R4N3"/>
<dbReference type="KEGG" id="set:SEN3469"/>
<dbReference type="HOGENOM" id="CLU_019796_1_2_6"/>
<dbReference type="Proteomes" id="UP000000613">
    <property type="component" value="Chromosome"/>
</dbReference>
<dbReference type="GO" id="GO:0005829">
    <property type="term" value="C:cytosol"/>
    <property type="evidence" value="ECO:0007669"/>
    <property type="project" value="TreeGrafter"/>
</dbReference>
<dbReference type="GO" id="GO:0005886">
    <property type="term" value="C:plasma membrane"/>
    <property type="evidence" value="ECO:0007669"/>
    <property type="project" value="UniProtKB-UniRule"/>
</dbReference>
<dbReference type="GO" id="GO:0030267">
    <property type="term" value="F:glyoxylate reductase (NADPH) activity"/>
    <property type="evidence" value="ECO:0007669"/>
    <property type="project" value="UniProtKB-UniRule"/>
</dbReference>
<dbReference type="GO" id="GO:0008465">
    <property type="term" value="F:hydroxypyruvate reductase (NADH) activity"/>
    <property type="evidence" value="ECO:0007669"/>
    <property type="project" value="RHEA"/>
</dbReference>
<dbReference type="GO" id="GO:0120509">
    <property type="term" value="F:hydroxypyruvate reductase (NADPH) activity"/>
    <property type="evidence" value="ECO:0007669"/>
    <property type="project" value="RHEA"/>
</dbReference>
<dbReference type="GO" id="GO:0051287">
    <property type="term" value="F:NAD binding"/>
    <property type="evidence" value="ECO:0007669"/>
    <property type="project" value="InterPro"/>
</dbReference>
<dbReference type="CDD" id="cd05301">
    <property type="entry name" value="GDH"/>
    <property type="match status" value="1"/>
</dbReference>
<dbReference type="FunFam" id="3.40.50.720:FF:000026">
    <property type="entry name" value="Glyoxylate/hydroxypyruvate reductase B"/>
    <property type="match status" value="1"/>
</dbReference>
<dbReference type="Gene3D" id="3.40.50.720">
    <property type="entry name" value="NAD(P)-binding Rossmann-like Domain"/>
    <property type="match status" value="2"/>
</dbReference>
<dbReference type="HAMAP" id="MF_01667">
    <property type="entry name" value="2_Hacid_dh_C_GhrB"/>
    <property type="match status" value="1"/>
</dbReference>
<dbReference type="InterPro" id="IPR050223">
    <property type="entry name" value="D-isomer_2-hydroxyacid_DH"/>
</dbReference>
<dbReference type="InterPro" id="IPR006139">
    <property type="entry name" value="D-isomer_2_OHA_DH_cat_dom"/>
</dbReference>
<dbReference type="InterPro" id="IPR029753">
    <property type="entry name" value="D-isomer_DH_CS"/>
</dbReference>
<dbReference type="InterPro" id="IPR006140">
    <property type="entry name" value="D-isomer_DH_NAD-bd"/>
</dbReference>
<dbReference type="InterPro" id="IPR023756">
    <property type="entry name" value="Glyo/OHPyrv_Rdtase_B"/>
</dbReference>
<dbReference type="InterPro" id="IPR036291">
    <property type="entry name" value="NAD(P)-bd_dom_sf"/>
</dbReference>
<dbReference type="NCBIfam" id="NF011938">
    <property type="entry name" value="PRK15409.1"/>
    <property type="match status" value="1"/>
</dbReference>
<dbReference type="PANTHER" id="PTHR10996">
    <property type="entry name" value="2-HYDROXYACID DEHYDROGENASE-RELATED"/>
    <property type="match status" value="1"/>
</dbReference>
<dbReference type="PANTHER" id="PTHR10996:SF283">
    <property type="entry name" value="GLYOXYLATE_HYDROXYPYRUVATE REDUCTASE B"/>
    <property type="match status" value="1"/>
</dbReference>
<dbReference type="Pfam" id="PF00389">
    <property type="entry name" value="2-Hacid_dh"/>
    <property type="match status" value="1"/>
</dbReference>
<dbReference type="Pfam" id="PF02826">
    <property type="entry name" value="2-Hacid_dh_C"/>
    <property type="match status" value="1"/>
</dbReference>
<dbReference type="SUPFAM" id="SSF52283">
    <property type="entry name" value="Formate/glycerate dehydrogenase catalytic domain-like"/>
    <property type="match status" value="1"/>
</dbReference>
<dbReference type="SUPFAM" id="SSF51735">
    <property type="entry name" value="NAD(P)-binding Rossmann-fold domains"/>
    <property type="match status" value="1"/>
</dbReference>
<dbReference type="PROSITE" id="PS00670">
    <property type="entry name" value="D_2_HYDROXYACID_DH_2"/>
    <property type="match status" value="1"/>
</dbReference>
<dbReference type="PROSITE" id="PS00671">
    <property type="entry name" value="D_2_HYDROXYACID_DH_3"/>
    <property type="match status" value="1"/>
</dbReference>
<feature type="chain" id="PRO_1000187296" description="Glyoxylate/hydroxypyruvate reductase B">
    <location>
        <begin position="1"/>
        <end position="324"/>
    </location>
</feature>
<feature type="active site" evidence="1">
    <location>
        <position position="237"/>
    </location>
</feature>
<feature type="active site" evidence="1">
    <location>
        <position position="266"/>
    </location>
</feature>
<feature type="active site" description="Proton donor" evidence="1">
    <location>
        <position position="285"/>
    </location>
</feature>
<organism>
    <name type="scientific">Salmonella enteritidis PT4 (strain P125109)</name>
    <dbReference type="NCBI Taxonomy" id="550537"/>
    <lineage>
        <taxon>Bacteria</taxon>
        <taxon>Pseudomonadati</taxon>
        <taxon>Pseudomonadota</taxon>
        <taxon>Gammaproteobacteria</taxon>
        <taxon>Enterobacterales</taxon>
        <taxon>Enterobacteriaceae</taxon>
        <taxon>Salmonella</taxon>
    </lineage>
</organism>
<gene>
    <name evidence="1" type="primary">ghrB</name>
    <name type="ordered locus">SEN3469</name>
</gene>
<sequence>MKPSIILYKTLPDDLLHRLEAHFTVTQVPNLHPETVARHAQAFASAQGLLGASETVNRALLEKMPALRAASTISVGYDNVEVDALTARKIVLMHTPAVLTETVADTVMALMLATARRVVDVAERVKAGEWTESIGPAWFGVDVHHKTLGIVGMGRIGMALAQRAHFGFTMPVLYHARRRHQEAEDRFNARYCDLDTLLQEADFVCVILPLTAETRHLFGATQFARMKSSAIFINAGRGPVVDENALIAALQNGEIYAAGLDVFEQEPLSVDSPLLNMSNVVAVPHIGSATHETRYNMMACAVDNLIDALQGKIEKNCVNPQAAG</sequence>
<accession>B5R4N3</accession>
<protein>
    <recommendedName>
        <fullName evidence="1">Glyoxylate/hydroxypyruvate reductase B</fullName>
        <ecNumber evidence="1">1.1.1.79</ecNumber>
        <ecNumber evidence="1">1.1.1.81</ecNumber>
    </recommendedName>
</protein>